<sequence length="253" mass="28779">MASGSNWLSGVNVVLVMAYGSLVFVLLFIFVKRQIMRFAMKSRRGPHVPVGHNAPKDLKEEIDIRLSRVQDIKYEPQLLADDDARLLQLETQGNQSCYNYLYRMKALDAIRTSEIPFHSEGRHPRSLMGKNFRSYLLDLRNTSTPFKGVRKALIDTLLDGYETARYGTGVFGQNEYLRYQEALSELATAVKARIGSSQRHHQSAAKDLTQSPEVSPTTIQVTYLPSSQKSKRAKHFLELKSFKDNYNTLESTL</sequence>
<protein>
    <recommendedName>
        <fullName>Protein C1orf43</fullName>
    </recommendedName>
    <alternativeName>
        <fullName evidence="7">Hepatitis C virus NS5A-transactivated protein 4</fullName>
        <shortName evidence="7">HCV NS5A-transactivated protein 4</shortName>
    </alternativeName>
    <alternativeName>
        <fullName>Protein NICE-3</fullName>
    </alternativeName>
    <alternativeName>
        <fullName>S863-3</fullName>
    </alternativeName>
</protein>
<dbReference type="EMBL" id="AJ243663">
    <property type="protein sequence ID" value="CAB65094.1"/>
    <property type="molecule type" value="mRNA"/>
</dbReference>
<dbReference type="EMBL" id="AJ243664">
    <property type="protein sequence ID" value="CAB65095.1"/>
    <property type="molecule type" value="mRNA"/>
</dbReference>
<dbReference type="EMBL" id="AJ243665">
    <property type="protein sequence ID" value="CAB65096.1"/>
    <property type="molecule type" value="mRNA"/>
</dbReference>
<dbReference type="EMBL" id="AF109185">
    <property type="protein sequence ID" value="AAQ13494.1"/>
    <property type="molecule type" value="mRNA"/>
</dbReference>
<dbReference type="EMBL" id="AF529365">
    <property type="protein sequence ID" value="AAQ09599.1"/>
    <property type="molecule type" value="mRNA"/>
</dbReference>
<dbReference type="EMBL" id="AF077036">
    <property type="protein sequence ID" value="AAD27769.1"/>
    <property type="molecule type" value="mRNA"/>
</dbReference>
<dbReference type="EMBL" id="AK290583">
    <property type="protein sequence ID" value="BAF83272.1"/>
    <property type="molecule type" value="mRNA"/>
</dbReference>
<dbReference type="EMBL" id="CR457131">
    <property type="protein sequence ID" value="CAG33412.1"/>
    <property type="molecule type" value="mRNA"/>
</dbReference>
<dbReference type="EMBL" id="AL590431">
    <property type="status" value="NOT_ANNOTATED_CDS"/>
    <property type="molecule type" value="Genomic_DNA"/>
</dbReference>
<dbReference type="EMBL" id="CH471121">
    <property type="protein sequence ID" value="EAW53221.1"/>
    <property type="molecule type" value="Genomic_DNA"/>
</dbReference>
<dbReference type="EMBL" id="CH471121">
    <property type="protein sequence ID" value="EAW53223.1"/>
    <property type="molecule type" value="Genomic_DNA"/>
</dbReference>
<dbReference type="EMBL" id="CH471121">
    <property type="protein sequence ID" value="EAW53224.1"/>
    <property type="molecule type" value="Genomic_DNA"/>
</dbReference>
<dbReference type="EMBL" id="CH471121">
    <property type="protein sequence ID" value="EAW53226.1"/>
    <property type="molecule type" value="Genomic_DNA"/>
</dbReference>
<dbReference type="EMBL" id="BC000152">
    <property type="protein sequence ID" value="AAH00152.1"/>
    <property type="molecule type" value="mRNA"/>
</dbReference>
<dbReference type="EMBL" id="BC001377">
    <property type="protein sequence ID" value="AAH01377.1"/>
    <property type="molecule type" value="mRNA"/>
</dbReference>
<dbReference type="EMBL" id="BC006514">
    <property type="protein sequence ID" value="AAH06514.1"/>
    <property type="molecule type" value="mRNA"/>
</dbReference>
<dbReference type="EMBL" id="BC008306">
    <property type="protein sequence ID" value="AAH08306.1"/>
    <property type="molecule type" value="mRNA"/>
</dbReference>
<dbReference type="EMBL" id="BC014391">
    <property type="protein sequence ID" value="AAH14391.1"/>
    <property type="molecule type" value="mRNA"/>
</dbReference>
<dbReference type="EMBL" id="BC088353">
    <property type="protein sequence ID" value="AAH88353.1"/>
    <property type="molecule type" value="mRNA"/>
</dbReference>
<dbReference type="EMBL" id="AL117463">
    <property type="protein sequence ID" value="CAB55939.2"/>
    <property type="molecule type" value="mRNA"/>
</dbReference>
<dbReference type="CCDS" id="CCDS1061.1">
    <molecule id="Q9BWL3-2"/>
</dbReference>
<dbReference type="CCDS" id="CCDS1062.1">
    <molecule id="Q9BWL3-4"/>
</dbReference>
<dbReference type="CCDS" id="CCDS41404.1">
    <molecule id="Q9BWL3-1"/>
</dbReference>
<dbReference type="CCDS" id="CCDS76220.1">
    <molecule id="Q9BWL3-3"/>
</dbReference>
<dbReference type="PIR" id="T17249">
    <property type="entry name" value="T17249"/>
</dbReference>
<dbReference type="RefSeq" id="NP_001092086.1">
    <molecule id="Q9BWL3-1"/>
    <property type="nucleotide sequence ID" value="NM_001098616.3"/>
</dbReference>
<dbReference type="RefSeq" id="NP_001284646.1">
    <molecule id="Q9BWL3-5"/>
    <property type="nucleotide sequence ID" value="NM_001297717.2"/>
</dbReference>
<dbReference type="RefSeq" id="NP_001284647.1">
    <property type="nucleotide sequence ID" value="NM_001297718.1"/>
</dbReference>
<dbReference type="RefSeq" id="NP_001284649.1">
    <property type="nucleotide sequence ID" value="NM_001297720.1"/>
</dbReference>
<dbReference type="RefSeq" id="NP_001284650.1">
    <property type="nucleotide sequence ID" value="NM_001297721.1"/>
</dbReference>
<dbReference type="RefSeq" id="NP_001284652.1">
    <molecule id="Q9BWL3-3"/>
    <property type="nucleotide sequence ID" value="NM_001297723.2"/>
</dbReference>
<dbReference type="RefSeq" id="NP_056264.1">
    <molecule id="Q9BWL3-2"/>
    <property type="nucleotide sequence ID" value="NM_015449.4"/>
</dbReference>
<dbReference type="RefSeq" id="NP_620077.1">
    <molecule id="Q9BWL3-4"/>
    <property type="nucleotide sequence ID" value="NM_138740.4"/>
</dbReference>
<dbReference type="SMR" id="Q9BWL3"/>
<dbReference type="BioGRID" id="117416">
    <property type="interactions" value="103"/>
</dbReference>
<dbReference type="FunCoup" id="Q9BWL3">
    <property type="interactions" value="3255"/>
</dbReference>
<dbReference type="IntAct" id="Q9BWL3">
    <property type="interactions" value="62"/>
</dbReference>
<dbReference type="MINT" id="Q9BWL3"/>
<dbReference type="STRING" id="9606.ENSP00000357507"/>
<dbReference type="GlyGen" id="Q9BWL3">
    <property type="glycosylation" value="1 site, 1 N-linked glycan (1 site)"/>
</dbReference>
<dbReference type="iPTMnet" id="Q9BWL3"/>
<dbReference type="PhosphoSitePlus" id="Q9BWL3"/>
<dbReference type="BioMuta" id="C1orf43"/>
<dbReference type="DMDM" id="68565268"/>
<dbReference type="jPOST" id="Q9BWL3"/>
<dbReference type="MassIVE" id="Q9BWL3"/>
<dbReference type="PaxDb" id="9606-ENSP00000357507"/>
<dbReference type="PeptideAtlas" id="Q9BWL3"/>
<dbReference type="ProteomicsDB" id="79287">
    <molecule id="Q9BWL3-1"/>
</dbReference>
<dbReference type="ProteomicsDB" id="79288">
    <molecule id="Q9BWL3-2"/>
</dbReference>
<dbReference type="ProteomicsDB" id="79289">
    <molecule id="Q9BWL3-3"/>
</dbReference>
<dbReference type="ProteomicsDB" id="79290">
    <molecule id="Q9BWL3-4"/>
</dbReference>
<dbReference type="ProteomicsDB" id="79291">
    <molecule id="Q9BWL3-5"/>
</dbReference>
<dbReference type="Pumba" id="Q9BWL3"/>
<dbReference type="Antibodypedia" id="2492">
    <property type="antibodies" value="67 antibodies from 14 providers"/>
</dbReference>
<dbReference type="DNASU" id="25912"/>
<dbReference type="Ensembl" id="ENST00000350592.7">
    <molecule id="Q9BWL3-2"/>
    <property type="protein sequence ID" value="ENSP00000271925.5"/>
    <property type="gene ID" value="ENSG00000143612.21"/>
</dbReference>
<dbReference type="Ensembl" id="ENST00000362076.8">
    <molecule id="Q9BWL3-4"/>
    <property type="protein sequence ID" value="ENSP00000354496.4"/>
    <property type="gene ID" value="ENSG00000143612.21"/>
</dbReference>
<dbReference type="Ensembl" id="ENST00000368518.5">
    <molecule id="Q9BWL3-3"/>
    <property type="protein sequence ID" value="ENSP00000357504.1"/>
    <property type="gene ID" value="ENSG00000143612.21"/>
</dbReference>
<dbReference type="Ensembl" id="ENST00000368521.10">
    <molecule id="Q9BWL3-1"/>
    <property type="protein sequence ID" value="ENSP00000357507.4"/>
    <property type="gene ID" value="ENSG00000143612.21"/>
</dbReference>
<dbReference type="GeneID" id="25912"/>
<dbReference type="KEGG" id="hsa:25912"/>
<dbReference type="MANE-Select" id="ENST00000368521.10">
    <property type="protein sequence ID" value="ENSP00000357507.4"/>
    <property type="RefSeq nucleotide sequence ID" value="NM_001098616.3"/>
    <property type="RefSeq protein sequence ID" value="NP_001092086.1"/>
</dbReference>
<dbReference type="UCSC" id="uc001feg.3">
    <molecule id="Q9BWL3-1"/>
    <property type="organism name" value="human"/>
</dbReference>
<dbReference type="AGR" id="HGNC:29876"/>
<dbReference type="CTD" id="25912"/>
<dbReference type="DisGeNET" id="25912"/>
<dbReference type="GeneCards" id="C1orf43"/>
<dbReference type="HGNC" id="HGNC:29876">
    <property type="gene designation" value="C1orf43"/>
</dbReference>
<dbReference type="HPA" id="ENSG00000143612">
    <property type="expression patterns" value="Low tissue specificity"/>
</dbReference>
<dbReference type="MIM" id="617428">
    <property type="type" value="gene"/>
</dbReference>
<dbReference type="neXtProt" id="NX_Q9BWL3"/>
<dbReference type="OpenTargets" id="ENSG00000143612"/>
<dbReference type="PharmGKB" id="PA134961848"/>
<dbReference type="VEuPathDB" id="HostDB:ENSG00000143612"/>
<dbReference type="eggNOG" id="ENOG502QUKH">
    <property type="taxonomic scope" value="Eukaryota"/>
</dbReference>
<dbReference type="GeneTree" id="ENSGT00510000047366"/>
<dbReference type="HOGENOM" id="CLU_068266_0_0_1"/>
<dbReference type="InParanoid" id="Q9BWL3"/>
<dbReference type="OMA" id="QHAKVNM"/>
<dbReference type="OrthoDB" id="5960253at2759"/>
<dbReference type="PAN-GO" id="Q9BWL3">
    <property type="GO annotations" value="1 GO annotation based on evolutionary models"/>
</dbReference>
<dbReference type="PhylomeDB" id="Q9BWL3"/>
<dbReference type="TreeFam" id="TF324880"/>
<dbReference type="PathwayCommons" id="Q9BWL3"/>
<dbReference type="SignaLink" id="Q9BWL3"/>
<dbReference type="BioGRID-ORCS" id="25912">
    <property type="hits" value="18 hits in 1144 CRISPR screens"/>
</dbReference>
<dbReference type="ChiTaRS" id="C1orf43">
    <property type="organism name" value="human"/>
</dbReference>
<dbReference type="GenomeRNAi" id="25912"/>
<dbReference type="Pharos" id="Q9BWL3">
    <property type="development level" value="Tbio"/>
</dbReference>
<dbReference type="PRO" id="PR:Q9BWL3"/>
<dbReference type="Proteomes" id="UP000005640">
    <property type="component" value="Chromosome 1"/>
</dbReference>
<dbReference type="RNAct" id="Q9BWL3">
    <property type="molecule type" value="protein"/>
</dbReference>
<dbReference type="Bgee" id="ENSG00000143612">
    <property type="expression patterns" value="Expressed in left ventricle myocardium and 191 other cell types or tissues"/>
</dbReference>
<dbReference type="ExpressionAtlas" id="Q9BWL3">
    <property type="expression patterns" value="baseline and differential"/>
</dbReference>
<dbReference type="GO" id="GO:0005829">
    <property type="term" value="C:cytosol"/>
    <property type="evidence" value="ECO:0000314"/>
    <property type="project" value="HPA"/>
</dbReference>
<dbReference type="GO" id="GO:0005794">
    <property type="term" value="C:Golgi apparatus"/>
    <property type="evidence" value="ECO:0000314"/>
    <property type="project" value="UniProtKB"/>
</dbReference>
<dbReference type="GO" id="GO:0016020">
    <property type="term" value="C:membrane"/>
    <property type="evidence" value="ECO:0007669"/>
    <property type="project" value="UniProtKB-SubCell"/>
</dbReference>
<dbReference type="GO" id="GO:0005739">
    <property type="term" value="C:mitochondrion"/>
    <property type="evidence" value="ECO:0000314"/>
    <property type="project" value="HPA"/>
</dbReference>
<dbReference type="GO" id="GO:0001701">
    <property type="term" value="P:in utero embryonic development"/>
    <property type="evidence" value="ECO:0007669"/>
    <property type="project" value="Ensembl"/>
</dbReference>
<dbReference type="GO" id="GO:0006909">
    <property type="term" value="P:phagocytosis"/>
    <property type="evidence" value="ECO:0000315"/>
    <property type="project" value="UniProtKB"/>
</dbReference>
<dbReference type="InterPro" id="IPR010876">
    <property type="entry name" value="C1orf43"/>
</dbReference>
<dbReference type="PANTHER" id="PTHR21425">
    <property type="entry name" value="NICE-3"/>
    <property type="match status" value="1"/>
</dbReference>
<dbReference type="PANTHER" id="PTHR21425:SF2">
    <property type="entry name" value="PROTEIN C1ORF43"/>
    <property type="match status" value="1"/>
</dbReference>
<dbReference type="Pfam" id="PF07406">
    <property type="entry name" value="NICE-3"/>
    <property type="match status" value="1"/>
</dbReference>
<name>CA043_HUMAN</name>
<accession>Q9BWL3</accession>
<accession>A8K3G8</accession>
<accession>D3DV72</accession>
<accession>D3DV74</accession>
<accession>Q5M801</accession>
<accession>Q5VU73</accession>
<accession>Q5VU83</accession>
<accession>Q96HP7</accession>
<accession>Q9UFU2</accession>
<accession>Q9UGL7</accession>
<accession>Q9UGL8</accession>
<accession>Q9Y2R6</accession>
<organism>
    <name type="scientific">Homo sapiens</name>
    <name type="common">Human</name>
    <dbReference type="NCBI Taxonomy" id="9606"/>
    <lineage>
        <taxon>Eukaryota</taxon>
        <taxon>Metazoa</taxon>
        <taxon>Chordata</taxon>
        <taxon>Craniata</taxon>
        <taxon>Vertebrata</taxon>
        <taxon>Euteleostomi</taxon>
        <taxon>Mammalia</taxon>
        <taxon>Eutheria</taxon>
        <taxon>Euarchontoglires</taxon>
        <taxon>Primates</taxon>
        <taxon>Haplorrhini</taxon>
        <taxon>Catarrhini</taxon>
        <taxon>Hominidae</taxon>
        <taxon>Homo</taxon>
    </lineage>
</organism>
<keyword id="KW-0025">Alternative splicing</keyword>
<keyword id="KW-0333">Golgi apparatus</keyword>
<keyword id="KW-0472">Membrane</keyword>
<keyword id="KW-0496">Mitochondrion</keyword>
<keyword id="KW-1267">Proteomics identification</keyword>
<keyword id="KW-1185">Reference proteome</keyword>
<keyword id="KW-0812">Transmembrane</keyword>
<keyword id="KW-1133">Transmembrane helix</keyword>
<proteinExistence type="evidence at protein level"/>
<feature type="chain" id="PRO_0000089256" description="Protein C1orf43">
    <location>
        <begin position="1"/>
        <end position="253"/>
    </location>
</feature>
<feature type="transmembrane region" description="Helical" evidence="1">
    <location>
        <begin position="11"/>
        <end position="31"/>
    </location>
</feature>
<feature type="splice variant" id="VSP_014417" description="In isoform 2 and isoform 4." evidence="3 4 6 8">
    <location>
        <begin position="23"/>
        <end position="56"/>
    </location>
</feature>
<feature type="splice variant" id="VSP_014418" description="In isoform 4 and isoform 5." evidence="4 6">
    <original>SCYNYLYRMKALDAIRTSE</original>
    <variation>K</variation>
    <location>
        <begin position="96"/>
        <end position="114"/>
    </location>
</feature>
<feature type="splice variant" id="VSP_014419" description="In isoform 5." evidence="6">
    <original>V</original>
    <variation>G</variation>
    <location>
        <position position="170"/>
    </location>
</feature>
<feature type="splice variant" id="VSP_014420" description="In isoform 5." evidence="6">
    <location>
        <begin position="171"/>
        <end position="253"/>
    </location>
</feature>
<feature type="splice variant" id="VSP_014421" description="In isoform 3." evidence="5 6">
    <location>
        <begin position="190"/>
        <end position="253"/>
    </location>
</feature>
<feature type="sequence conflict" description="In Ref. 1; CAB65096." evidence="9" ref="1">
    <original>A</original>
    <variation>V</variation>
    <location>
        <position position="39"/>
    </location>
</feature>
<gene>
    <name type="primary">C1orf43</name>
    <name type="synonym">NICE3</name>
    <name evidence="7" type="synonym">NS5ATP4</name>
    <name type="ORF">HSPC012</name>
</gene>
<evidence type="ECO:0000255" key="1"/>
<evidence type="ECO:0000269" key="2">
    <source>
    </source>
</evidence>
<evidence type="ECO:0000303" key="3">
    <source>
    </source>
</evidence>
<evidence type="ECO:0000303" key="4">
    <source>
    </source>
</evidence>
<evidence type="ECO:0000303" key="5">
    <source>
    </source>
</evidence>
<evidence type="ECO:0000303" key="6">
    <source>
    </source>
</evidence>
<evidence type="ECO:0000303" key="7">
    <source ref="3"/>
</evidence>
<evidence type="ECO:0000303" key="8">
    <source ref="6"/>
</evidence>
<evidence type="ECO:0000305" key="9"/>
<reference key="1">
    <citation type="journal article" date="2001" name="Genome Res.">
        <title>Identification of human epidermal differentiation complex (EDC)-encoded genes by subtractive hybridization of entire YACs to a gridded keratinocyte cDNA library.</title>
        <authorList>
            <person name="Marenholz I."/>
            <person name="Zirra M."/>
            <person name="Fischer D.F."/>
            <person name="Backendorf C."/>
            <person name="Ziegler A."/>
            <person name="Mischke D."/>
        </authorList>
    </citation>
    <scope>NUCLEOTIDE SEQUENCE [MRNA] (ISOFORMS 2 AND 4)</scope>
    <scope>NUCLEOTIDE SEQUENCE [MRNA] OF 37-253 (ISOFORM 1)</scope>
    <source>
        <tissue>Keratinocyte</tissue>
    </source>
</reference>
<reference key="2">
    <citation type="submission" date="1998-11" db="EMBL/GenBank/DDBJ databases">
        <authorList>
            <person name="Liu B."/>
            <person name="Zhao B."/>
            <person name="Wang X.Y."/>
            <person name="Xu Y.Y."/>
            <person name="Liu Y.Q."/>
            <person name="Song L."/>
            <person name="Ye J."/>
            <person name="Sheng H."/>
            <person name="Gao Y."/>
            <person name="Zhang C.L."/>
            <person name="Wei Y.J."/>
            <person name="Zhang J."/>
            <person name="Song L."/>
            <person name="Jiang Y.X."/>
            <person name="Zhao Z.W."/>
            <person name="Ding J.F."/>
            <person name="Liu L.S."/>
            <person name="Gao R.L."/>
            <person name="Wu Q.Y."/>
            <person name="Qiang B.Q."/>
            <person name="Yuan J.G."/>
            <person name="Liew C.C."/>
            <person name="Zhao M.S."/>
            <person name="Hui R.T."/>
        </authorList>
    </citation>
    <scope>NUCLEOTIDE SEQUENCE [MRNA] (ISOFORM 1)</scope>
    <source>
        <tissue>Aorta</tissue>
    </source>
</reference>
<reference key="3">
    <citation type="submission" date="2002-07" db="EMBL/GenBank/DDBJ databases">
        <title>Cloning and identification of human gene 4 transactivated by hepatitis C virus NS5A protein.</title>
        <authorList>
            <person name="Liu Y."/>
            <person name="Cheng J."/>
            <person name="Wang G."/>
            <person name="Wang J."/>
            <person name="Zhang L."/>
            <person name="Chen J."/>
            <person name="Li L."/>
        </authorList>
    </citation>
    <scope>NUCLEOTIDE SEQUENCE [MRNA] (ISOFORM 1)</scope>
</reference>
<reference key="4">
    <citation type="journal article" date="2000" name="Genome Res.">
        <title>Cloning and functional analysis of cDNAs with open reading frames for 300 previously undefined genes expressed in CD34+ hematopoietic stem/progenitor cells.</title>
        <authorList>
            <person name="Zhang Q.-H."/>
            <person name="Ye M."/>
            <person name="Wu X.-Y."/>
            <person name="Ren S.-X."/>
            <person name="Zhao M."/>
            <person name="Zhao C.-J."/>
            <person name="Fu G."/>
            <person name="Shen Y."/>
            <person name="Fan H.-Y."/>
            <person name="Lu G."/>
            <person name="Zhong M."/>
            <person name="Xu X.-R."/>
            <person name="Han Z.-G."/>
            <person name="Zhang J.-W."/>
            <person name="Tao J."/>
            <person name="Huang Q.-H."/>
            <person name="Zhou J."/>
            <person name="Hu G.-X."/>
            <person name="Gu J."/>
            <person name="Chen S.-J."/>
            <person name="Chen Z."/>
        </authorList>
    </citation>
    <scope>NUCLEOTIDE SEQUENCE [LARGE SCALE MRNA] (ISOFORM 2)</scope>
    <source>
        <tissue>Umbilical cord blood</tissue>
    </source>
</reference>
<reference key="5">
    <citation type="journal article" date="2004" name="Nat. Genet.">
        <title>Complete sequencing and characterization of 21,243 full-length human cDNAs.</title>
        <authorList>
            <person name="Ota T."/>
            <person name="Suzuki Y."/>
            <person name="Nishikawa T."/>
            <person name="Otsuki T."/>
            <person name="Sugiyama T."/>
            <person name="Irie R."/>
            <person name="Wakamatsu A."/>
            <person name="Hayashi K."/>
            <person name="Sato H."/>
            <person name="Nagai K."/>
            <person name="Kimura K."/>
            <person name="Makita H."/>
            <person name="Sekine M."/>
            <person name="Obayashi M."/>
            <person name="Nishi T."/>
            <person name="Shibahara T."/>
            <person name="Tanaka T."/>
            <person name="Ishii S."/>
            <person name="Yamamoto J."/>
            <person name="Saito K."/>
            <person name="Kawai Y."/>
            <person name="Isono Y."/>
            <person name="Nakamura Y."/>
            <person name="Nagahari K."/>
            <person name="Murakami K."/>
            <person name="Yasuda T."/>
            <person name="Iwayanagi T."/>
            <person name="Wagatsuma M."/>
            <person name="Shiratori A."/>
            <person name="Sudo H."/>
            <person name="Hosoiri T."/>
            <person name="Kaku Y."/>
            <person name="Kodaira H."/>
            <person name="Kondo H."/>
            <person name="Sugawara M."/>
            <person name="Takahashi M."/>
            <person name="Kanda K."/>
            <person name="Yokoi T."/>
            <person name="Furuya T."/>
            <person name="Kikkawa E."/>
            <person name="Omura Y."/>
            <person name="Abe K."/>
            <person name="Kamihara K."/>
            <person name="Katsuta N."/>
            <person name="Sato K."/>
            <person name="Tanikawa M."/>
            <person name="Yamazaki M."/>
            <person name="Ninomiya K."/>
            <person name="Ishibashi T."/>
            <person name="Yamashita H."/>
            <person name="Murakawa K."/>
            <person name="Fujimori K."/>
            <person name="Tanai H."/>
            <person name="Kimata M."/>
            <person name="Watanabe M."/>
            <person name="Hiraoka S."/>
            <person name="Chiba Y."/>
            <person name="Ishida S."/>
            <person name="Ono Y."/>
            <person name="Takiguchi S."/>
            <person name="Watanabe S."/>
            <person name="Yosida M."/>
            <person name="Hotuta T."/>
            <person name="Kusano J."/>
            <person name="Kanehori K."/>
            <person name="Takahashi-Fujii A."/>
            <person name="Hara H."/>
            <person name="Tanase T.-O."/>
            <person name="Nomura Y."/>
            <person name="Togiya S."/>
            <person name="Komai F."/>
            <person name="Hara R."/>
            <person name="Takeuchi K."/>
            <person name="Arita M."/>
            <person name="Imose N."/>
            <person name="Musashino K."/>
            <person name="Yuuki H."/>
            <person name="Oshima A."/>
            <person name="Sasaki N."/>
            <person name="Aotsuka S."/>
            <person name="Yoshikawa Y."/>
            <person name="Matsunawa H."/>
            <person name="Ichihara T."/>
            <person name="Shiohata N."/>
            <person name="Sano S."/>
            <person name="Moriya S."/>
            <person name="Momiyama H."/>
            <person name="Satoh N."/>
            <person name="Takami S."/>
            <person name="Terashima Y."/>
            <person name="Suzuki O."/>
            <person name="Nakagawa S."/>
            <person name="Senoh A."/>
            <person name="Mizoguchi H."/>
            <person name="Goto Y."/>
            <person name="Shimizu F."/>
            <person name="Wakebe H."/>
            <person name="Hishigaki H."/>
            <person name="Watanabe T."/>
            <person name="Sugiyama A."/>
            <person name="Takemoto M."/>
            <person name="Kawakami B."/>
            <person name="Yamazaki M."/>
            <person name="Watanabe K."/>
            <person name="Kumagai A."/>
            <person name="Itakura S."/>
            <person name="Fukuzumi Y."/>
            <person name="Fujimori Y."/>
            <person name="Komiyama M."/>
            <person name="Tashiro H."/>
            <person name="Tanigami A."/>
            <person name="Fujiwara T."/>
            <person name="Ono T."/>
            <person name="Yamada K."/>
            <person name="Fujii Y."/>
            <person name="Ozaki K."/>
            <person name="Hirao M."/>
            <person name="Ohmori Y."/>
            <person name="Kawabata A."/>
            <person name="Hikiji T."/>
            <person name="Kobatake N."/>
            <person name="Inagaki H."/>
            <person name="Ikema Y."/>
            <person name="Okamoto S."/>
            <person name="Okitani R."/>
            <person name="Kawakami T."/>
            <person name="Noguchi S."/>
            <person name="Itoh T."/>
            <person name="Shigeta K."/>
            <person name="Senba T."/>
            <person name="Matsumura K."/>
            <person name="Nakajima Y."/>
            <person name="Mizuno T."/>
            <person name="Morinaga M."/>
            <person name="Sasaki M."/>
            <person name="Togashi T."/>
            <person name="Oyama M."/>
            <person name="Hata H."/>
            <person name="Watanabe M."/>
            <person name="Komatsu T."/>
            <person name="Mizushima-Sugano J."/>
            <person name="Satoh T."/>
            <person name="Shirai Y."/>
            <person name="Takahashi Y."/>
            <person name="Nakagawa K."/>
            <person name="Okumura K."/>
            <person name="Nagase T."/>
            <person name="Nomura N."/>
            <person name="Kikuchi H."/>
            <person name="Masuho Y."/>
            <person name="Yamashita R."/>
            <person name="Nakai K."/>
            <person name="Yada T."/>
            <person name="Nakamura Y."/>
            <person name="Ohara O."/>
            <person name="Isogai T."/>
            <person name="Sugano S."/>
        </authorList>
    </citation>
    <scope>NUCLEOTIDE SEQUENCE [LARGE SCALE MRNA] (ISOFORM 3)</scope>
</reference>
<reference key="6">
    <citation type="submission" date="2004-06" db="EMBL/GenBank/DDBJ databases">
        <title>Cloning of human full open reading frames in Gateway(TM) system entry vector (pDONR201).</title>
        <authorList>
            <person name="Ebert L."/>
            <person name="Schick M."/>
            <person name="Neubert P."/>
            <person name="Schatten R."/>
            <person name="Henze S."/>
            <person name="Korn B."/>
        </authorList>
    </citation>
    <scope>NUCLEOTIDE SEQUENCE [LARGE SCALE MRNA] (ISOFORM 2)</scope>
</reference>
<reference key="7">
    <citation type="journal article" date="2006" name="Nature">
        <title>The DNA sequence and biological annotation of human chromosome 1.</title>
        <authorList>
            <person name="Gregory S.G."/>
            <person name="Barlow K.F."/>
            <person name="McLay K.E."/>
            <person name="Kaul R."/>
            <person name="Swarbreck D."/>
            <person name="Dunham A."/>
            <person name="Scott C.E."/>
            <person name="Howe K.L."/>
            <person name="Woodfine K."/>
            <person name="Spencer C.C.A."/>
            <person name="Jones M.C."/>
            <person name="Gillson C."/>
            <person name="Searle S."/>
            <person name="Zhou Y."/>
            <person name="Kokocinski F."/>
            <person name="McDonald L."/>
            <person name="Evans R."/>
            <person name="Phillips K."/>
            <person name="Atkinson A."/>
            <person name="Cooper R."/>
            <person name="Jones C."/>
            <person name="Hall R.E."/>
            <person name="Andrews T.D."/>
            <person name="Lloyd C."/>
            <person name="Ainscough R."/>
            <person name="Almeida J.P."/>
            <person name="Ambrose K.D."/>
            <person name="Anderson F."/>
            <person name="Andrew R.W."/>
            <person name="Ashwell R.I.S."/>
            <person name="Aubin K."/>
            <person name="Babbage A.K."/>
            <person name="Bagguley C.L."/>
            <person name="Bailey J."/>
            <person name="Beasley H."/>
            <person name="Bethel G."/>
            <person name="Bird C.P."/>
            <person name="Bray-Allen S."/>
            <person name="Brown J.Y."/>
            <person name="Brown A.J."/>
            <person name="Buckley D."/>
            <person name="Burton J."/>
            <person name="Bye J."/>
            <person name="Carder C."/>
            <person name="Chapman J.C."/>
            <person name="Clark S.Y."/>
            <person name="Clarke G."/>
            <person name="Clee C."/>
            <person name="Cobley V."/>
            <person name="Collier R.E."/>
            <person name="Corby N."/>
            <person name="Coville G.J."/>
            <person name="Davies J."/>
            <person name="Deadman R."/>
            <person name="Dunn M."/>
            <person name="Earthrowl M."/>
            <person name="Ellington A.G."/>
            <person name="Errington H."/>
            <person name="Frankish A."/>
            <person name="Frankland J."/>
            <person name="French L."/>
            <person name="Garner P."/>
            <person name="Garnett J."/>
            <person name="Gay L."/>
            <person name="Ghori M.R.J."/>
            <person name="Gibson R."/>
            <person name="Gilby L.M."/>
            <person name="Gillett W."/>
            <person name="Glithero R.J."/>
            <person name="Grafham D.V."/>
            <person name="Griffiths C."/>
            <person name="Griffiths-Jones S."/>
            <person name="Grocock R."/>
            <person name="Hammond S."/>
            <person name="Harrison E.S.I."/>
            <person name="Hart E."/>
            <person name="Haugen E."/>
            <person name="Heath P.D."/>
            <person name="Holmes S."/>
            <person name="Holt K."/>
            <person name="Howden P.J."/>
            <person name="Hunt A.R."/>
            <person name="Hunt S.E."/>
            <person name="Hunter G."/>
            <person name="Isherwood J."/>
            <person name="James R."/>
            <person name="Johnson C."/>
            <person name="Johnson D."/>
            <person name="Joy A."/>
            <person name="Kay M."/>
            <person name="Kershaw J.K."/>
            <person name="Kibukawa M."/>
            <person name="Kimberley A.M."/>
            <person name="King A."/>
            <person name="Knights A.J."/>
            <person name="Lad H."/>
            <person name="Laird G."/>
            <person name="Lawlor S."/>
            <person name="Leongamornlert D.A."/>
            <person name="Lloyd D.M."/>
            <person name="Loveland J."/>
            <person name="Lovell J."/>
            <person name="Lush M.J."/>
            <person name="Lyne R."/>
            <person name="Martin S."/>
            <person name="Mashreghi-Mohammadi M."/>
            <person name="Matthews L."/>
            <person name="Matthews N.S.W."/>
            <person name="McLaren S."/>
            <person name="Milne S."/>
            <person name="Mistry S."/>
            <person name="Moore M.J.F."/>
            <person name="Nickerson T."/>
            <person name="O'Dell C.N."/>
            <person name="Oliver K."/>
            <person name="Palmeiri A."/>
            <person name="Palmer S.A."/>
            <person name="Parker A."/>
            <person name="Patel D."/>
            <person name="Pearce A.V."/>
            <person name="Peck A.I."/>
            <person name="Pelan S."/>
            <person name="Phelps K."/>
            <person name="Phillimore B.J."/>
            <person name="Plumb R."/>
            <person name="Rajan J."/>
            <person name="Raymond C."/>
            <person name="Rouse G."/>
            <person name="Saenphimmachak C."/>
            <person name="Sehra H.K."/>
            <person name="Sheridan E."/>
            <person name="Shownkeen R."/>
            <person name="Sims S."/>
            <person name="Skuce C.D."/>
            <person name="Smith M."/>
            <person name="Steward C."/>
            <person name="Subramanian S."/>
            <person name="Sycamore N."/>
            <person name="Tracey A."/>
            <person name="Tromans A."/>
            <person name="Van Helmond Z."/>
            <person name="Wall M."/>
            <person name="Wallis J.M."/>
            <person name="White S."/>
            <person name="Whitehead S.L."/>
            <person name="Wilkinson J.E."/>
            <person name="Willey D.L."/>
            <person name="Williams H."/>
            <person name="Wilming L."/>
            <person name="Wray P.W."/>
            <person name="Wu Z."/>
            <person name="Coulson A."/>
            <person name="Vaudin M."/>
            <person name="Sulston J.E."/>
            <person name="Durbin R.M."/>
            <person name="Hubbard T."/>
            <person name="Wooster R."/>
            <person name="Dunham I."/>
            <person name="Carter N.P."/>
            <person name="McVean G."/>
            <person name="Ross M.T."/>
            <person name="Harrow J."/>
            <person name="Olson M.V."/>
            <person name="Beck S."/>
            <person name="Rogers J."/>
            <person name="Bentley D.R."/>
        </authorList>
    </citation>
    <scope>NUCLEOTIDE SEQUENCE [LARGE SCALE GENOMIC DNA]</scope>
</reference>
<reference key="8">
    <citation type="submission" date="2005-09" db="EMBL/GenBank/DDBJ databases">
        <authorList>
            <person name="Mural R.J."/>
            <person name="Istrail S."/>
            <person name="Sutton G.G."/>
            <person name="Florea L."/>
            <person name="Halpern A.L."/>
            <person name="Mobarry C.M."/>
            <person name="Lippert R."/>
            <person name="Walenz B."/>
            <person name="Shatkay H."/>
            <person name="Dew I."/>
            <person name="Miller J.R."/>
            <person name="Flanigan M.J."/>
            <person name="Edwards N.J."/>
            <person name="Bolanos R."/>
            <person name="Fasulo D."/>
            <person name="Halldorsson B.V."/>
            <person name="Hannenhalli S."/>
            <person name="Turner R."/>
            <person name="Yooseph S."/>
            <person name="Lu F."/>
            <person name="Nusskern D.R."/>
            <person name="Shue B.C."/>
            <person name="Zheng X.H."/>
            <person name="Zhong F."/>
            <person name="Delcher A.L."/>
            <person name="Huson D.H."/>
            <person name="Kravitz S.A."/>
            <person name="Mouchard L."/>
            <person name="Reinert K."/>
            <person name="Remington K.A."/>
            <person name="Clark A.G."/>
            <person name="Waterman M.S."/>
            <person name="Eichler E.E."/>
            <person name="Adams M.D."/>
            <person name="Hunkapiller M.W."/>
            <person name="Myers E.W."/>
            <person name="Venter J.C."/>
        </authorList>
    </citation>
    <scope>NUCLEOTIDE SEQUENCE [LARGE SCALE GENOMIC DNA]</scope>
</reference>
<reference key="9">
    <citation type="journal article" date="2004" name="Genome Res.">
        <title>The status, quality, and expansion of the NIH full-length cDNA project: the Mammalian Gene Collection (MGC).</title>
        <authorList>
            <consortium name="The MGC Project Team"/>
        </authorList>
    </citation>
    <scope>NUCLEOTIDE SEQUENCE [LARGE SCALE MRNA] (ISOFORMS 1; 2; 3 AND 5)</scope>
    <source>
        <tissue>Brain</tissue>
        <tissue>Cervix</tissue>
        <tissue>Kidney</tissue>
        <tissue>Lung</tissue>
        <tissue>Skin</tissue>
    </source>
</reference>
<reference key="10">
    <citation type="journal article" date="2007" name="BMC Genomics">
        <title>The full-ORF clone resource of the German cDNA consortium.</title>
        <authorList>
            <person name="Bechtel S."/>
            <person name="Rosenfelder H."/>
            <person name="Duda A."/>
            <person name="Schmidt C.P."/>
            <person name="Ernst U."/>
            <person name="Wellenreuther R."/>
            <person name="Mehrle A."/>
            <person name="Schuster C."/>
            <person name="Bahr A."/>
            <person name="Bloecker H."/>
            <person name="Heubner D."/>
            <person name="Hoerlein A."/>
            <person name="Michel G."/>
            <person name="Wedler H."/>
            <person name="Koehrer K."/>
            <person name="Ottenwaelder B."/>
            <person name="Poustka A."/>
            <person name="Wiemann S."/>
            <person name="Schupp I."/>
        </authorList>
    </citation>
    <scope>NUCLEOTIDE SEQUENCE [LARGE SCALE MRNA] OF 53-253 (ISOFORM 1)</scope>
    <source>
        <tissue>Uterus</tissue>
    </source>
</reference>
<reference key="11">
    <citation type="journal article" date="2019" name="Cell Host Microbe">
        <title>Systematic Identification of Host Cell Regulators of Legionella pneumophila Pathogenesis Using a Genome-wide CRISPR Screen.</title>
        <authorList>
            <person name="Jeng E.E."/>
            <person name="Bhadkamkar V."/>
            <person name="Ibe N.U."/>
            <person name="Gause H."/>
            <person name="Jiang L."/>
            <person name="Chan J."/>
            <person name="Jian R."/>
            <person name="Jimenez-Morales D."/>
            <person name="Stevenson E."/>
            <person name="Krogan N.J."/>
            <person name="Swaney D.L."/>
            <person name="Snyder M.P."/>
            <person name="Mukherjee S."/>
            <person name="Bassik M.C."/>
        </authorList>
    </citation>
    <scope>FUNCTION</scope>
    <scope>SUBCELLULAR LOCATION</scope>
    <scope>DOMAIN</scope>
</reference>
<comment type="function">
    <text evidence="2">General regulator of phagocytosis. Required to uptake Gram negative bacterium by macrophages.</text>
</comment>
<comment type="subcellular location">
    <subcellularLocation>
        <location evidence="9">Membrane</location>
        <topology evidence="9">Single-pass membrane protein</topology>
    </subcellularLocation>
    <subcellularLocation>
        <location evidence="2">Golgi apparatus</location>
    </subcellularLocation>
    <subcellularLocation>
        <location evidence="2">Mitochondrion</location>
    </subcellularLocation>
</comment>
<comment type="alternative products">
    <event type="alternative splicing"/>
    <isoform>
        <id>Q9BWL3-1</id>
        <name>1</name>
        <sequence type="displayed"/>
    </isoform>
    <isoform>
        <id>Q9BWL3-2</id>
        <name>2</name>
        <name>Nice-3</name>
        <sequence type="described" ref="VSP_014417"/>
    </isoform>
    <isoform>
        <id>Q9BWL3-3</id>
        <name>3</name>
        <sequence type="described" ref="VSP_014421"/>
    </isoform>
    <isoform>
        <id>Q9BWL3-4</id>
        <name>4</name>
        <sequence type="described" ref="VSP_014417 VSP_014418"/>
    </isoform>
    <isoform>
        <id>Q9BWL3-5</id>
        <name>5</name>
        <sequence type="described" ref="VSP_014418 VSP_014419 VSP_014420"/>
    </isoform>
</comment>
<comment type="domain">
    <text evidence="2">N-terminal region is required for phagocytosis of Gram negative bacterium.</text>
</comment>